<proteinExistence type="inferred from homology"/>
<name>HPRK_BACAN</name>
<evidence type="ECO:0000255" key="1">
    <source>
        <dbReference type="HAMAP-Rule" id="MF_01249"/>
    </source>
</evidence>
<organism>
    <name type="scientific">Bacillus anthracis</name>
    <dbReference type="NCBI Taxonomy" id="1392"/>
    <lineage>
        <taxon>Bacteria</taxon>
        <taxon>Bacillati</taxon>
        <taxon>Bacillota</taxon>
        <taxon>Bacilli</taxon>
        <taxon>Bacillales</taxon>
        <taxon>Bacillaceae</taxon>
        <taxon>Bacillus</taxon>
        <taxon>Bacillus cereus group</taxon>
    </lineage>
</organism>
<gene>
    <name evidence="1" type="primary">hprK</name>
    <name type="ordered locus">BA_5392</name>
    <name type="ordered locus">GBAA_5392</name>
    <name type="ordered locus">BAS5012</name>
</gene>
<comment type="function">
    <text evidence="1">Catalyzes the ATP- as well as the pyrophosphate-dependent phosphorylation of a specific serine residue in HPr, a phosphocarrier protein of the phosphoenolpyruvate-dependent sugar phosphotransferase system (PTS). HprK/P also catalyzes the pyrophosphate-producing, inorganic phosphate-dependent dephosphorylation (phosphorolysis) of seryl-phosphorylated HPr (P-Ser-HPr). The two antagonistic activities of HprK/P are regulated by several intracellular metabolites, which change their concentration in response to the absence or presence of rapidly metabolisable carbon sources (glucose, fructose, etc.) in the growth medium. Also phosphorylates/dephosphorylates the HPr-like catabolite repression protein crh on a specific serine residue. Therefore, by controlling the phosphorylation state of HPr and crh, HPrK/P is a sensor enzyme that plays a major role in the regulation of carbon metabolism and sugar transport: it mediates carbon catabolite repression (CCR), and regulates PTS-catalyzed carbohydrate uptake and inducer exclusion.</text>
</comment>
<comment type="catalytic activity">
    <reaction evidence="1">
        <text>[HPr protein]-L-serine + ATP = [HPr protein]-O-phospho-L-serine + ADP + H(+)</text>
        <dbReference type="Rhea" id="RHEA:46600"/>
        <dbReference type="Rhea" id="RHEA-COMP:11602"/>
        <dbReference type="Rhea" id="RHEA-COMP:11603"/>
        <dbReference type="ChEBI" id="CHEBI:15378"/>
        <dbReference type="ChEBI" id="CHEBI:29999"/>
        <dbReference type="ChEBI" id="CHEBI:30616"/>
        <dbReference type="ChEBI" id="CHEBI:83421"/>
        <dbReference type="ChEBI" id="CHEBI:456216"/>
    </reaction>
</comment>
<comment type="catalytic activity">
    <reaction evidence="1">
        <text>[HPr protein]-O-phospho-L-serine + phosphate + H(+) = [HPr protein]-L-serine + diphosphate</text>
        <dbReference type="Rhea" id="RHEA:46604"/>
        <dbReference type="Rhea" id="RHEA-COMP:11602"/>
        <dbReference type="Rhea" id="RHEA-COMP:11603"/>
        <dbReference type="ChEBI" id="CHEBI:15378"/>
        <dbReference type="ChEBI" id="CHEBI:29999"/>
        <dbReference type="ChEBI" id="CHEBI:33019"/>
        <dbReference type="ChEBI" id="CHEBI:43474"/>
        <dbReference type="ChEBI" id="CHEBI:83421"/>
    </reaction>
</comment>
<comment type="cofactor">
    <cofactor evidence="1">
        <name>Mg(2+)</name>
        <dbReference type="ChEBI" id="CHEBI:18420"/>
    </cofactor>
</comment>
<comment type="subunit">
    <text evidence="1">Homohexamer.</text>
</comment>
<comment type="domain">
    <text evidence="1">The Walker A ATP-binding motif also binds Pi and PPi.</text>
</comment>
<comment type="miscellaneous">
    <text evidence="1">Both phosphorylation and phosphorolysis are carried out by the same active site and suggest a common mechanism for both reactions.</text>
</comment>
<comment type="similarity">
    <text evidence="1">Belongs to the HPrK/P family.</text>
</comment>
<sequence>MPKVRTKDLIEQFQLELISGEEGIHRPIDTSDLSRPGIEMAGFFTYYPADRVQLLGKTELTFFDTLTSDQKQERMKALCTEETPCIIVTRNQDVPDELLQASRESGMPLLRSSQTTTRLSSRLTNYLEGKLAPTTAVHGVLVDIYGVGVLITGQSGVGKSETALELVKRGHRLVADDSVEIRQEDEDMLVGSSPDLIEHLLEIRGLGIINVMTLFGAGAVRNYKRITLVINLEIWDQKKNYDRLGLDEEKMKIIDTELTKITLPVRPGRNLAVIIEVAAMNFRLKRMGVNAAQQFSERLMSAIELGNQE</sequence>
<dbReference type="EC" id="2.7.11.-" evidence="1"/>
<dbReference type="EC" id="2.7.4.-" evidence="1"/>
<dbReference type="EMBL" id="AE016879">
    <property type="protein sequence ID" value="AAP29051.1"/>
    <property type="molecule type" value="Genomic_DNA"/>
</dbReference>
<dbReference type="EMBL" id="AE017334">
    <property type="protein sequence ID" value="AAT34526.1"/>
    <property type="molecule type" value="Genomic_DNA"/>
</dbReference>
<dbReference type="EMBL" id="AE017225">
    <property type="protein sequence ID" value="AAT57301.1"/>
    <property type="molecule type" value="Genomic_DNA"/>
</dbReference>
<dbReference type="RefSeq" id="NP_847565.1">
    <property type="nucleotide sequence ID" value="NC_003997.3"/>
</dbReference>
<dbReference type="RefSeq" id="WP_001127244.1">
    <property type="nucleotide sequence ID" value="NZ_WXXJ01000012.1"/>
</dbReference>
<dbReference type="RefSeq" id="YP_031251.1">
    <property type="nucleotide sequence ID" value="NC_005945.1"/>
</dbReference>
<dbReference type="SMR" id="Q81X51"/>
<dbReference type="STRING" id="261594.GBAA_5392"/>
<dbReference type="DNASU" id="1084957"/>
<dbReference type="GeneID" id="45024995"/>
<dbReference type="KEGG" id="ban:BA_5392"/>
<dbReference type="KEGG" id="bar:GBAA_5392"/>
<dbReference type="KEGG" id="bat:BAS5012"/>
<dbReference type="PATRIC" id="fig|198094.11.peg.5350"/>
<dbReference type="eggNOG" id="COG1493">
    <property type="taxonomic scope" value="Bacteria"/>
</dbReference>
<dbReference type="HOGENOM" id="CLU_052030_0_1_9"/>
<dbReference type="OMA" id="IFPGKNI"/>
<dbReference type="OrthoDB" id="9778803at2"/>
<dbReference type="Proteomes" id="UP000000427">
    <property type="component" value="Chromosome"/>
</dbReference>
<dbReference type="Proteomes" id="UP000000594">
    <property type="component" value="Chromosome"/>
</dbReference>
<dbReference type="GO" id="GO:0005524">
    <property type="term" value="F:ATP binding"/>
    <property type="evidence" value="ECO:0007669"/>
    <property type="project" value="UniProtKB-UniRule"/>
</dbReference>
<dbReference type="GO" id="GO:0000287">
    <property type="term" value="F:magnesium ion binding"/>
    <property type="evidence" value="ECO:0007669"/>
    <property type="project" value="UniProtKB-UniRule"/>
</dbReference>
<dbReference type="GO" id="GO:0000155">
    <property type="term" value="F:phosphorelay sensor kinase activity"/>
    <property type="evidence" value="ECO:0007669"/>
    <property type="project" value="InterPro"/>
</dbReference>
<dbReference type="GO" id="GO:0004674">
    <property type="term" value="F:protein serine/threonine kinase activity"/>
    <property type="evidence" value="ECO:0007669"/>
    <property type="project" value="UniProtKB-KW"/>
</dbReference>
<dbReference type="GO" id="GO:0004712">
    <property type="term" value="F:protein serine/threonine/tyrosine kinase activity"/>
    <property type="evidence" value="ECO:0007669"/>
    <property type="project" value="UniProtKB-UniRule"/>
</dbReference>
<dbReference type="GO" id="GO:0006109">
    <property type="term" value="P:regulation of carbohydrate metabolic process"/>
    <property type="evidence" value="ECO:0007669"/>
    <property type="project" value="UniProtKB-UniRule"/>
</dbReference>
<dbReference type="CDD" id="cd01918">
    <property type="entry name" value="HprK_C"/>
    <property type="match status" value="1"/>
</dbReference>
<dbReference type="FunFam" id="3.40.1390.20:FF:000002">
    <property type="entry name" value="HPr kinase/phosphorylase"/>
    <property type="match status" value="1"/>
</dbReference>
<dbReference type="FunFam" id="3.40.50.300:FF:000174">
    <property type="entry name" value="HPr kinase/phosphorylase"/>
    <property type="match status" value="1"/>
</dbReference>
<dbReference type="Gene3D" id="3.40.1390.20">
    <property type="entry name" value="HprK N-terminal domain-like"/>
    <property type="match status" value="1"/>
</dbReference>
<dbReference type="Gene3D" id="3.40.50.300">
    <property type="entry name" value="P-loop containing nucleotide triphosphate hydrolases"/>
    <property type="match status" value="1"/>
</dbReference>
<dbReference type="HAMAP" id="MF_01249">
    <property type="entry name" value="HPr_kinase"/>
    <property type="match status" value="1"/>
</dbReference>
<dbReference type="InterPro" id="IPR003755">
    <property type="entry name" value="HPr(Ser)_kin/Pase"/>
</dbReference>
<dbReference type="InterPro" id="IPR011104">
    <property type="entry name" value="Hpr_kin/Pase_C"/>
</dbReference>
<dbReference type="InterPro" id="IPR011126">
    <property type="entry name" value="Hpr_kin/Pase_Hpr_N"/>
</dbReference>
<dbReference type="InterPro" id="IPR027417">
    <property type="entry name" value="P-loop_NTPase"/>
</dbReference>
<dbReference type="InterPro" id="IPR028979">
    <property type="entry name" value="Ser_kin/Pase_Hpr-like_N_sf"/>
</dbReference>
<dbReference type="NCBIfam" id="TIGR00679">
    <property type="entry name" value="hpr-ser"/>
    <property type="match status" value="1"/>
</dbReference>
<dbReference type="PANTHER" id="PTHR30305:SF1">
    <property type="entry name" value="HPR KINASE_PHOSPHORYLASE"/>
    <property type="match status" value="1"/>
</dbReference>
<dbReference type="PANTHER" id="PTHR30305">
    <property type="entry name" value="PROTEIN YJDM-RELATED"/>
    <property type="match status" value="1"/>
</dbReference>
<dbReference type="Pfam" id="PF07475">
    <property type="entry name" value="Hpr_kinase_C"/>
    <property type="match status" value="1"/>
</dbReference>
<dbReference type="Pfam" id="PF02603">
    <property type="entry name" value="Hpr_kinase_N"/>
    <property type="match status" value="1"/>
</dbReference>
<dbReference type="SUPFAM" id="SSF75138">
    <property type="entry name" value="HprK N-terminal domain-like"/>
    <property type="match status" value="1"/>
</dbReference>
<dbReference type="SUPFAM" id="SSF53795">
    <property type="entry name" value="PEP carboxykinase-like"/>
    <property type="match status" value="1"/>
</dbReference>
<accession>Q81X51</accession>
<accession>Q6HQY7</accession>
<accession>Q6KKA6</accession>
<feature type="chain" id="PRO_0000058943" description="HPr kinase/phosphorylase">
    <location>
        <begin position="1"/>
        <end position="309"/>
    </location>
</feature>
<feature type="region of interest" description="Important for the catalytic mechanism of both phosphorylation and dephosphorylation" evidence="1">
    <location>
        <begin position="201"/>
        <end position="210"/>
    </location>
</feature>
<feature type="region of interest" description="Important for the catalytic mechanism of dephosphorylation" evidence="1">
    <location>
        <begin position="264"/>
        <end position="269"/>
    </location>
</feature>
<feature type="active site" evidence="1">
    <location>
        <position position="138"/>
    </location>
</feature>
<feature type="active site" evidence="1">
    <location>
        <position position="159"/>
    </location>
</feature>
<feature type="active site" description="Proton acceptor; for phosphorylation activity. Proton donor; for dephosphorylation activity" evidence="1">
    <location>
        <position position="177"/>
    </location>
</feature>
<feature type="active site" evidence="1">
    <location>
        <position position="243"/>
    </location>
</feature>
<feature type="binding site" evidence="1">
    <location>
        <begin position="153"/>
        <end position="160"/>
    </location>
    <ligand>
        <name>ATP</name>
        <dbReference type="ChEBI" id="CHEBI:30616"/>
    </ligand>
</feature>
<feature type="binding site" evidence="1">
    <location>
        <position position="160"/>
    </location>
    <ligand>
        <name>Mg(2+)</name>
        <dbReference type="ChEBI" id="CHEBI:18420"/>
    </ligand>
</feature>
<feature type="binding site" evidence="1">
    <location>
        <position position="202"/>
    </location>
    <ligand>
        <name>Mg(2+)</name>
        <dbReference type="ChEBI" id="CHEBI:18420"/>
    </ligand>
</feature>
<keyword id="KW-0067">ATP-binding</keyword>
<keyword id="KW-0119">Carbohydrate metabolism</keyword>
<keyword id="KW-0418">Kinase</keyword>
<keyword id="KW-0460">Magnesium</keyword>
<keyword id="KW-0479">Metal-binding</keyword>
<keyword id="KW-0511">Multifunctional enzyme</keyword>
<keyword id="KW-0547">Nucleotide-binding</keyword>
<keyword id="KW-1185">Reference proteome</keyword>
<keyword id="KW-0723">Serine/threonine-protein kinase</keyword>
<keyword id="KW-0808">Transferase</keyword>
<reference key="1">
    <citation type="journal article" date="2003" name="Nature">
        <title>The genome sequence of Bacillus anthracis Ames and comparison to closely related bacteria.</title>
        <authorList>
            <person name="Read T.D."/>
            <person name="Peterson S.N."/>
            <person name="Tourasse N.J."/>
            <person name="Baillie L.W."/>
            <person name="Paulsen I.T."/>
            <person name="Nelson K.E."/>
            <person name="Tettelin H."/>
            <person name="Fouts D.E."/>
            <person name="Eisen J.A."/>
            <person name="Gill S.R."/>
            <person name="Holtzapple E.K."/>
            <person name="Okstad O.A."/>
            <person name="Helgason E."/>
            <person name="Rilstone J."/>
            <person name="Wu M."/>
            <person name="Kolonay J.F."/>
            <person name="Beanan M.J."/>
            <person name="Dodson R.J."/>
            <person name="Brinkac L.M."/>
            <person name="Gwinn M.L."/>
            <person name="DeBoy R.T."/>
            <person name="Madpu R."/>
            <person name="Daugherty S.C."/>
            <person name="Durkin A.S."/>
            <person name="Haft D.H."/>
            <person name="Nelson W.C."/>
            <person name="Peterson J.D."/>
            <person name="Pop M."/>
            <person name="Khouri H.M."/>
            <person name="Radune D."/>
            <person name="Benton J.L."/>
            <person name="Mahamoud Y."/>
            <person name="Jiang L."/>
            <person name="Hance I.R."/>
            <person name="Weidman J.F."/>
            <person name="Berry K.J."/>
            <person name="Plaut R.D."/>
            <person name="Wolf A.M."/>
            <person name="Watkins K.L."/>
            <person name="Nierman W.C."/>
            <person name="Hazen A."/>
            <person name="Cline R.T."/>
            <person name="Redmond C."/>
            <person name="Thwaite J.E."/>
            <person name="White O."/>
            <person name="Salzberg S.L."/>
            <person name="Thomason B."/>
            <person name="Friedlander A.M."/>
            <person name="Koehler T.M."/>
            <person name="Hanna P.C."/>
            <person name="Kolstoe A.-B."/>
            <person name="Fraser C.M."/>
        </authorList>
    </citation>
    <scope>NUCLEOTIDE SEQUENCE [LARGE SCALE GENOMIC DNA]</scope>
    <source>
        <strain>Ames / isolate Porton</strain>
    </source>
</reference>
<reference key="2">
    <citation type="journal article" date="2009" name="J. Bacteriol.">
        <title>The complete genome sequence of Bacillus anthracis Ames 'Ancestor'.</title>
        <authorList>
            <person name="Ravel J."/>
            <person name="Jiang L."/>
            <person name="Stanley S.T."/>
            <person name="Wilson M.R."/>
            <person name="Decker R.S."/>
            <person name="Read T.D."/>
            <person name="Worsham P."/>
            <person name="Keim P.S."/>
            <person name="Salzberg S.L."/>
            <person name="Fraser-Liggett C.M."/>
            <person name="Rasko D.A."/>
        </authorList>
    </citation>
    <scope>NUCLEOTIDE SEQUENCE [LARGE SCALE GENOMIC DNA]</scope>
    <source>
        <strain>Ames ancestor</strain>
    </source>
</reference>
<reference key="3">
    <citation type="submission" date="2004-01" db="EMBL/GenBank/DDBJ databases">
        <title>Complete genome sequence of Bacillus anthracis Sterne.</title>
        <authorList>
            <person name="Brettin T.S."/>
            <person name="Bruce D."/>
            <person name="Challacombe J.F."/>
            <person name="Gilna P."/>
            <person name="Han C."/>
            <person name="Hill K."/>
            <person name="Hitchcock P."/>
            <person name="Jackson P."/>
            <person name="Keim P."/>
            <person name="Longmire J."/>
            <person name="Lucas S."/>
            <person name="Okinaka R."/>
            <person name="Richardson P."/>
            <person name="Rubin E."/>
            <person name="Tice H."/>
        </authorList>
    </citation>
    <scope>NUCLEOTIDE SEQUENCE [LARGE SCALE GENOMIC DNA]</scope>
    <source>
        <strain>Sterne</strain>
    </source>
</reference>
<protein>
    <recommendedName>
        <fullName evidence="1">HPr kinase/phosphorylase</fullName>
        <shortName evidence="1">HPrK/P</shortName>
        <ecNumber evidence="1">2.7.11.-</ecNumber>
        <ecNumber evidence="1">2.7.4.-</ecNumber>
    </recommendedName>
    <alternativeName>
        <fullName evidence="1">HPr(Ser) kinase/phosphorylase</fullName>
    </alternativeName>
</protein>